<feature type="chain" id="PRO_1000050682" description="Large ribosomal subunit protein bL35">
    <location>
        <begin position="1"/>
        <end position="65"/>
    </location>
</feature>
<accession>A7GI03</accession>
<proteinExistence type="inferred from homology"/>
<keyword id="KW-0687">Ribonucleoprotein</keyword>
<keyword id="KW-0689">Ribosomal protein</keyword>
<reference key="1">
    <citation type="submission" date="2007-06" db="EMBL/GenBank/DDBJ databases">
        <authorList>
            <person name="Brinkac L.M."/>
            <person name="Daugherty S."/>
            <person name="Dodson R.J."/>
            <person name="Madupu R."/>
            <person name="Brown J.L."/>
            <person name="Bruce D."/>
            <person name="Detter C."/>
            <person name="Munk C."/>
            <person name="Smith L.A."/>
            <person name="Smith T.J."/>
            <person name="White O."/>
            <person name="Brettin T.S."/>
        </authorList>
    </citation>
    <scope>NUCLEOTIDE SEQUENCE [LARGE SCALE GENOMIC DNA]</scope>
    <source>
        <strain>Langeland / NCTC 10281 / Type F</strain>
    </source>
</reference>
<organism>
    <name type="scientific">Clostridium botulinum (strain Langeland / NCTC 10281 / Type F)</name>
    <dbReference type="NCBI Taxonomy" id="441772"/>
    <lineage>
        <taxon>Bacteria</taxon>
        <taxon>Bacillati</taxon>
        <taxon>Bacillota</taxon>
        <taxon>Clostridia</taxon>
        <taxon>Eubacteriales</taxon>
        <taxon>Clostridiaceae</taxon>
        <taxon>Clostridium</taxon>
    </lineage>
</organism>
<sequence>MPKMKTKRAAAKRFKVTGTGKLKRAKAFKSHILTKKSRKTKRNLRKAGYVSESQEKVMKKVLPYL</sequence>
<comment type="similarity">
    <text evidence="1">Belongs to the bacterial ribosomal protein bL35 family.</text>
</comment>
<dbReference type="EMBL" id="CP000728">
    <property type="protein sequence ID" value="ABS42009.1"/>
    <property type="molecule type" value="Genomic_DNA"/>
</dbReference>
<dbReference type="RefSeq" id="WP_003357520.1">
    <property type="nucleotide sequence ID" value="NC_009699.1"/>
</dbReference>
<dbReference type="SMR" id="A7GI03"/>
<dbReference type="GeneID" id="92939857"/>
<dbReference type="KEGG" id="cbf:CLI_3194"/>
<dbReference type="HOGENOM" id="CLU_169643_1_1_9"/>
<dbReference type="Proteomes" id="UP000002410">
    <property type="component" value="Chromosome"/>
</dbReference>
<dbReference type="GO" id="GO:0022625">
    <property type="term" value="C:cytosolic large ribosomal subunit"/>
    <property type="evidence" value="ECO:0007669"/>
    <property type="project" value="TreeGrafter"/>
</dbReference>
<dbReference type="GO" id="GO:0003735">
    <property type="term" value="F:structural constituent of ribosome"/>
    <property type="evidence" value="ECO:0007669"/>
    <property type="project" value="InterPro"/>
</dbReference>
<dbReference type="GO" id="GO:0006412">
    <property type="term" value="P:translation"/>
    <property type="evidence" value="ECO:0007669"/>
    <property type="project" value="UniProtKB-UniRule"/>
</dbReference>
<dbReference type="FunFam" id="4.10.410.60:FF:000001">
    <property type="entry name" value="50S ribosomal protein L35"/>
    <property type="match status" value="1"/>
</dbReference>
<dbReference type="Gene3D" id="4.10.410.60">
    <property type="match status" value="1"/>
</dbReference>
<dbReference type="HAMAP" id="MF_00514">
    <property type="entry name" value="Ribosomal_bL35"/>
    <property type="match status" value="1"/>
</dbReference>
<dbReference type="InterPro" id="IPR001706">
    <property type="entry name" value="Ribosomal_bL35"/>
</dbReference>
<dbReference type="InterPro" id="IPR021137">
    <property type="entry name" value="Ribosomal_bL35-like"/>
</dbReference>
<dbReference type="InterPro" id="IPR018265">
    <property type="entry name" value="Ribosomal_bL35_CS"/>
</dbReference>
<dbReference type="InterPro" id="IPR037229">
    <property type="entry name" value="Ribosomal_bL35_sf"/>
</dbReference>
<dbReference type="NCBIfam" id="TIGR00001">
    <property type="entry name" value="rpmI_bact"/>
    <property type="match status" value="1"/>
</dbReference>
<dbReference type="PANTHER" id="PTHR33343">
    <property type="entry name" value="54S RIBOSOMAL PROTEIN BL35M"/>
    <property type="match status" value="1"/>
</dbReference>
<dbReference type="PANTHER" id="PTHR33343:SF1">
    <property type="entry name" value="LARGE RIBOSOMAL SUBUNIT PROTEIN BL35M"/>
    <property type="match status" value="1"/>
</dbReference>
<dbReference type="Pfam" id="PF01632">
    <property type="entry name" value="Ribosomal_L35p"/>
    <property type="match status" value="1"/>
</dbReference>
<dbReference type="PRINTS" id="PR00064">
    <property type="entry name" value="RIBOSOMALL35"/>
</dbReference>
<dbReference type="SUPFAM" id="SSF143034">
    <property type="entry name" value="L35p-like"/>
    <property type="match status" value="1"/>
</dbReference>
<dbReference type="PROSITE" id="PS00936">
    <property type="entry name" value="RIBOSOMAL_L35"/>
    <property type="match status" value="1"/>
</dbReference>
<name>RL35_CLOBL</name>
<gene>
    <name evidence="1" type="primary">rpmI</name>
    <name type="ordered locus">CLI_3194</name>
</gene>
<evidence type="ECO:0000255" key="1">
    <source>
        <dbReference type="HAMAP-Rule" id="MF_00514"/>
    </source>
</evidence>
<evidence type="ECO:0000305" key="2"/>
<protein>
    <recommendedName>
        <fullName evidence="1">Large ribosomal subunit protein bL35</fullName>
    </recommendedName>
    <alternativeName>
        <fullName evidence="2">50S ribosomal protein L35</fullName>
    </alternativeName>
</protein>